<reference key="1">
    <citation type="journal article" date="2002" name="Gene">
        <title>Genomic organization of the human mi-er1 gene and characterization of alternatively spliced isoforms: regulated use of a facultative intron determines subcellular localization.</title>
        <authorList>
            <person name="Paterno G.D."/>
            <person name="Ding Z."/>
            <person name="Yew Y.-Y."/>
            <person name="Nash G.W."/>
            <person name="Mercer F.C."/>
            <person name="Gillespie L.L."/>
        </authorList>
    </citation>
    <scope>NUCLEOTIDE SEQUENCE [MRNA] (ISOFORMS 1; 2; 3; 4; 5 AND 6)</scope>
    <scope>TISSUE SPECIFICITY</scope>
    <scope>SUBCELLULAR LOCATION</scope>
</reference>
<reference key="2">
    <citation type="submission" date="2011-09" db="EMBL/GenBank/DDBJ databases">
        <authorList>
            <person name="Paterno G.D."/>
            <person name="Ding Z."/>
            <person name="Lew Y.Y."/>
            <person name="Nash G.W."/>
            <person name="Mercer F.C."/>
            <person name="Gillespie L.L."/>
        </authorList>
    </citation>
    <scope>SEQUENCE REVISION</scope>
</reference>
<reference key="3">
    <citation type="journal article" date="2004" name="Nat. Genet.">
        <title>Complete sequencing and characterization of 21,243 full-length human cDNAs.</title>
        <authorList>
            <person name="Ota T."/>
            <person name="Suzuki Y."/>
            <person name="Nishikawa T."/>
            <person name="Otsuki T."/>
            <person name="Sugiyama T."/>
            <person name="Irie R."/>
            <person name="Wakamatsu A."/>
            <person name="Hayashi K."/>
            <person name="Sato H."/>
            <person name="Nagai K."/>
            <person name="Kimura K."/>
            <person name="Makita H."/>
            <person name="Sekine M."/>
            <person name="Obayashi M."/>
            <person name="Nishi T."/>
            <person name="Shibahara T."/>
            <person name="Tanaka T."/>
            <person name="Ishii S."/>
            <person name="Yamamoto J."/>
            <person name="Saito K."/>
            <person name="Kawai Y."/>
            <person name="Isono Y."/>
            <person name="Nakamura Y."/>
            <person name="Nagahari K."/>
            <person name="Murakami K."/>
            <person name="Yasuda T."/>
            <person name="Iwayanagi T."/>
            <person name="Wagatsuma M."/>
            <person name="Shiratori A."/>
            <person name="Sudo H."/>
            <person name="Hosoiri T."/>
            <person name="Kaku Y."/>
            <person name="Kodaira H."/>
            <person name="Kondo H."/>
            <person name="Sugawara M."/>
            <person name="Takahashi M."/>
            <person name="Kanda K."/>
            <person name="Yokoi T."/>
            <person name="Furuya T."/>
            <person name="Kikkawa E."/>
            <person name="Omura Y."/>
            <person name="Abe K."/>
            <person name="Kamihara K."/>
            <person name="Katsuta N."/>
            <person name="Sato K."/>
            <person name="Tanikawa M."/>
            <person name="Yamazaki M."/>
            <person name="Ninomiya K."/>
            <person name="Ishibashi T."/>
            <person name="Yamashita H."/>
            <person name="Murakawa K."/>
            <person name="Fujimori K."/>
            <person name="Tanai H."/>
            <person name="Kimata M."/>
            <person name="Watanabe M."/>
            <person name="Hiraoka S."/>
            <person name="Chiba Y."/>
            <person name="Ishida S."/>
            <person name="Ono Y."/>
            <person name="Takiguchi S."/>
            <person name="Watanabe S."/>
            <person name="Yosida M."/>
            <person name="Hotuta T."/>
            <person name="Kusano J."/>
            <person name="Kanehori K."/>
            <person name="Takahashi-Fujii A."/>
            <person name="Hara H."/>
            <person name="Tanase T.-O."/>
            <person name="Nomura Y."/>
            <person name="Togiya S."/>
            <person name="Komai F."/>
            <person name="Hara R."/>
            <person name="Takeuchi K."/>
            <person name="Arita M."/>
            <person name="Imose N."/>
            <person name="Musashino K."/>
            <person name="Yuuki H."/>
            <person name="Oshima A."/>
            <person name="Sasaki N."/>
            <person name="Aotsuka S."/>
            <person name="Yoshikawa Y."/>
            <person name="Matsunawa H."/>
            <person name="Ichihara T."/>
            <person name="Shiohata N."/>
            <person name="Sano S."/>
            <person name="Moriya S."/>
            <person name="Momiyama H."/>
            <person name="Satoh N."/>
            <person name="Takami S."/>
            <person name="Terashima Y."/>
            <person name="Suzuki O."/>
            <person name="Nakagawa S."/>
            <person name="Senoh A."/>
            <person name="Mizoguchi H."/>
            <person name="Goto Y."/>
            <person name="Shimizu F."/>
            <person name="Wakebe H."/>
            <person name="Hishigaki H."/>
            <person name="Watanabe T."/>
            <person name="Sugiyama A."/>
            <person name="Takemoto M."/>
            <person name="Kawakami B."/>
            <person name="Yamazaki M."/>
            <person name="Watanabe K."/>
            <person name="Kumagai A."/>
            <person name="Itakura S."/>
            <person name="Fukuzumi Y."/>
            <person name="Fujimori Y."/>
            <person name="Komiyama M."/>
            <person name="Tashiro H."/>
            <person name="Tanigami A."/>
            <person name="Fujiwara T."/>
            <person name="Ono T."/>
            <person name="Yamada K."/>
            <person name="Fujii Y."/>
            <person name="Ozaki K."/>
            <person name="Hirao M."/>
            <person name="Ohmori Y."/>
            <person name="Kawabata A."/>
            <person name="Hikiji T."/>
            <person name="Kobatake N."/>
            <person name="Inagaki H."/>
            <person name="Ikema Y."/>
            <person name="Okamoto S."/>
            <person name="Okitani R."/>
            <person name="Kawakami T."/>
            <person name="Noguchi S."/>
            <person name="Itoh T."/>
            <person name="Shigeta K."/>
            <person name="Senba T."/>
            <person name="Matsumura K."/>
            <person name="Nakajima Y."/>
            <person name="Mizuno T."/>
            <person name="Morinaga M."/>
            <person name="Sasaki M."/>
            <person name="Togashi T."/>
            <person name="Oyama M."/>
            <person name="Hata H."/>
            <person name="Watanabe M."/>
            <person name="Komatsu T."/>
            <person name="Mizushima-Sugano J."/>
            <person name="Satoh T."/>
            <person name="Shirai Y."/>
            <person name="Takahashi Y."/>
            <person name="Nakagawa K."/>
            <person name="Okumura K."/>
            <person name="Nagase T."/>
            <person name="Nomura N."/>
            <person name="Kikuchi H."/>
            <person name="Masuho Y."/>
            <person name="Yamashita R."/>
            <person name="Nakai K."/>
            <person name="Yada T."/>
            <person name="Nakamura Y."/>
            <person name="Ohara O."/>
            <person name="Isogai T."/>
            <person name="Sugano S."/>
        </authorList>
    </citation>
    <scope>NUCLEOTIDE SEQUENCE [LARGE SCALE MRNA] (ISOFORM 2)</scope>
    <scope>NUCLEOTIDE SEQUENCE [LARGE SCALE MRNA] OF 1-204 (ISOFORMS 1/6)</scope>
    <source>
        <tissue>Testis</tissue>
    </source>
</reference>
<reference key="4">
    <citation type="journal article" date="2007" name="BMC Genomics">
        <title>The full-ORF clone resource of the German cDNA consortium.</title>
        <authorList>
            <person name="Bechtel S."/>
            <person name="Rosenfelder H."/>
            <person name="Duda A."/>
            <person name="Schmidt C.P."/>
            <person name="Ernst U."/>
            <person name="Wellenreuther R."/>
            <person name="Mehrle A."/>
            <person name="Schuster C."/>
            <person name="Bahr A."/>
            <person name="Bloecker H."/>
            <person name="Heubner D."/>
            <person name="Hoerlein A."/>
            <person name="Michel G."/>
            <person name="Wedler H."/>
            <person name="Koehrer K."/>
            <person name="Ottenwaelder B."/>
            <person name="Poustka A."/>
            <person name="Wiemann S."/>
            <person name="Schupp I."/>
        </authorList>
    </citation>
    <scope>NUCLEOTIDE SEQUENCE [LARGE SCALE MRNA] (ISOFORMS 3 AND 7)</scope>
    <source>
        <tissue>Retina</tissue>
        <tissue>Skeletal muscle</tissue>
    </source>
</reference>
<reference key="5">
    <citation type="journal article" date="2006" name="Nature">
        <title>The DNA sequence and biological annotation of human chromosome 1.</title>
        <authorList>
            <person name="Gregory S.G."/>
            <person name="Barlow K.F."/>
            <person name="McLay K.E."/>
            <person name="Kaul R."/>
            <person name="Swarbreck D."/>
            <person name="Dunham A."/>
            <person name="Scott C.E."/>
            <person name="Howe K.L."/>
            <person name="Woodfine K."/>
            <person name="Spencer C.C.A."/>
            <person name="Jones M.C."/>
            <person name="Gillson C."/>
            <person name="Searle S."/>
            <person name="Zhou Y."/>
            <person name="Kokocinski F."/>
            <person name="McDonald L."/>
            <person name="Evans R."/>
            <person name="Phillips K."/>
            <person name="Atkinson A."/>
            <person name="Cooper R."/>
            <person name="Jones C."/>
            <person name="Hall R.E."/>
            <person name="Andrews T.D."/>
            <person name="Lloyd C."/>
            <person name="Ainscough R."/>
            <person name="Almeida J.P."/>
            <person name="Ambrose K.D."/>
            <person name="Anderson F."/>
            <person name="Andrew R.W."/>
            <person name="Ashwell R.I.S."/>
            <person name="Aubin K."/>
            <person name="Babbage A.K."/>
            <person name="Bagguley C.L."/>
            <person name="Bailey J."/>
            <person name="Beasley H."/>
            <person name="Bethel G."/>
            <person name="Bird C.P."/>
            <person name="Bray-Allen S."/>
            <person name="Brown J.Y."/>
            <person name="Brown A.J."/>
            <person name="Buckley D."/>
            <person name="Burton J."/>
            <person name="Bye J."/>
            <person name="Carder C."/>
            <person name="Chapman J.C."/>
            <person name="Clark S.Y."/>
            <person name="Clarke G."/>
            <person name="Clee C."/>
            <person name="Cobley V."/>
            <person name="Collier R.E."/>
            <person name="Corby N."/>
            <person name="Coville G.J."/>
            <person name="Davies J."/>
            <person name="Deadman R."/>
            <person name="Dunn M."/>
            <person name="Earthrowl M."/>
            <person name="Ellington A.G."/>
            <person name="Errington H."/>
            <person name="Frankish A."/>
            <person name="Frankland J."/>
            <person name="French L."/>
            <person name="Garner P."/>
            <person name="Garnett J."/>
            <person name="Gay L."/>
            <person name="Ghori M.R.J."/>
            <person name="Gibson R."/>
            <person name="Gilby L.M."/>
            <person name="Gillett W."/>
            <person name="Glithero R.J."/>
            <person name="Grafham D.V."/>
            <person name="Griffiths C."/>
            <person name="Griffiths-Jones S."/>
            <person name="Grocock R."/>
            <person name="Hammond S."/>
            <person name="Harrison E.S.I."/>
            <person name="Hart E."/>
            <person name="Haugen E."/>
            <person name="Heath P.D."/>
            <person name="Holmes S."/>
            <person name="Holt K."/>
            <person name="Howden P.J."/>
            <person name="Hunt A.R."/>
            <person name="Hunt S.E."/>
            <person name="Hunter G."/>
            <person name="Isherwood J."/>
            <person name="James R."/>
            <person name="Johnson C."/>
            <person name="Johnson D."/>
            <person name="Joy A."/>
            <person name="Kay M."/>
            <person name="Kershaw J.K."/>
            <person name="Kibukawa M."/>
            <person name="Kimberley A.M."/>
            <person name="King A."/>
            <person name="Knights A.J."/>
            <person name="Lad H."/>
            <person name="Laird G."/>
            <person name="Lawlor S."/>
            <person name="Leongamornlert D.A."/>
            <person name="Lloyd D.M."/>
            <person name="Loveland J."/>
            <person name="Lovell J."/>
            <person name="Lush M.J."/>
            <person name="Lyne R."/>
            <person name="Martin S."/>
            <person name="Mashreghi-Mohammadi M."/>
            <person name="Matthews L."/>
            <person name="Matthews N.S.W."/>
            <person name="McLaren S."/>
            <person name="Milne S."/>
            <person name="Mistry S."/>
            <person name="Moore M.J.F."/>
            <person name="Nickerson T."/>
            <person name="O'Dell C.N."/>
            <person name="Oliver K."/>
            <person name="Palmeiri A."/>
            <person name="Palmer S.A."/>
            <person name="Parker A."/>
            <person name="Patel D."/>
            <person name="Pearce A.V."/>
            <person name="Peck A.I."/>
            <person name="Pelan S."/>
            <person name="Phelps K."/>
            <person name="Phillimore B.J."/>
            <person name="Plumb R."/>
            <person name="Rajan J."/>
            <person name="Raymond C."/>
            <person name="Rouse G."/>
            <person name="Saenphimmachak C."/>
            <person name="Sehra H.K."/>
            <person name="Sheridan E."/>
            <person name="Shownkeen R."/>
            <person name="Sims S."/>
            <person name="Skuce C.D."/>
            <person name="Smith M."/>
            <person name="Steward C."/>
            <person name="Subramanian S."/>
            <person name="Sycamore N."/>
            <person name="Tracey A."/>
            <person name="Tromans A."/>
            <person name="Van Helmond Z."/>
            <person name="Wall M."/>
            <person name="Wallis J.M."/>
            <person name="White S."/>
            <person name="Whitehead S.L."/>
            <person name="Wilkinson J.E."/>
            <person name="Willey D.L."/>
            <person name="Williams H."/>
            <person name="Wilming L."/>
            <person name="Wray P.W."/>
            <person name="Wu Z."/>
            <person name="Coulson A."/>
            <person name="Vaudin M."/>
            <person name="Sulston J.E."/>
            <person name="Durbin R.M."/>
            <person name="Hubbard T."/>
            <person name="Wooster R."/>
            <person name="Dunham I."/>
            <person name="Carter N.P."/>
            <person name="McVean G."/>
            <person name="Ross M.T."/>
            <person name="Harrow J."/>
            <person name="Olson M.V."/>
            <person name="Beck S."/>
            <person name="Rogers J."/>
            <person name="Bentley D.R."/>
        </authorList>
    </citation>
    <scope>NUCLEOTIDE SEQUENCE [LARGE SCALE GENOMIC DNA]</scope>
</reference>
<reference key="6">
    <citation type="submission" date="2005-09" db="EMBL/GenBank/DDBJ databases">
        <authorList>
            <person name="Mural R.J."/>
            <person name="Istrail S."/>
            <person name="Sutton G."/>
            <person name="Florea L."/>
            <person name="Halpern A.L."/>
            <person name="Mobarry C.M."/>
            <person name="Lippert R."/>
            <person name="Walenz B."/>
            <person name="Shatkay H."/>
            <person name="Dew I."/>
            <person name="Miller J.R."/>
            <person name="Flanigan M.J."/>
            <person name="Edwards N.J."/>
            <person name="Bolanos R."/>
            <person name="Fasulo D."/>
            <person name="Halldorsson B.V."/>
            <person name="Hannenhalli S."/>
            <person name="Turner R."/>
            <person name="Yooseph S."/>
            <person name="Lu F."/>
            <person name="Nusskern D.R."/>
            <person name="Shue B.C."/>
            <person name="Zheng X.H."/>
            <person name="Zhong F."/>
            <person name="Delcher A.L."/>
            <person name="Huson D.H."/>
            <person name="Kravitz S.A."/>
            <person name="Mouchard L."/>
            <person name="Reinert K."/>
            <person name="Remington K.A."/>
            <person name="Clark A.G."/>
            <person name="Waterman M.S."/>
            <person name="Eichler E.E."/>
            <person name="Adams M.D."/>
            <person name="Hunkapiller M.W."/>
            <person name="Myers E.W."/>
            <person name="Venter J.C."/>
        </authorList>
    </citation>
    <scope>NUCLEOTIDE SEQUENCE [LARGE SCALE GENOMIC DNA]</scope>
</reference>
<reference key="7">
    <citation type="journal article" date="2004" name="Genome Res.">
        <title>The status, quality, and expansion of the NIH full-length cDNA project: the Mammalian Gene Collection (MGC).</title>
        <authorList>
            <consortium name="The MGC Project Team"/>
        </authorList>
    </citation>
    <scope>NUCLEOTIDE SEQUENCE [LARGE SCALE MRNA] (ISOFORMS 8; 9 AND 10)</scope>
    <scope>NUCLEOTIDE SEQUENCE [LARGE SCALE MRNA] OF 1-199 (ISOFORMS 1/6)</scope>
    <source>
        <tissue>Lung</tissue>
        <tissue>Testis</tissue>
    </source>
</reference>
<reference key="8">
    <citation type="journal article" date="2000" name="DNA Res.">
        <title>Prediction of the coding sequences of unidentified human genes. XVIII. The complete sequences of 100 new cDNA clones from brain which code for large proteins in vitro.</title>
        <authorList>
            <person name="Nagase T."/>
            <person name="Kikuno R."/>
            <person name="Nakayama M."/>
            <person name="Hirosawa M."/>
            <person name="Ohara O."/>
        </authorList>
    </citation>
    <scope>NUCLEOTIDE SEQUENCE [LARGE SCALE MRNA] OF 29-512 (ISOFORMS 1/2/3/7)</scope>
</reference>
<reference key="9">
    <citation type="journal article" date="2003" name="Mol. Cell. Biol.">
        <title>Human MI-ER1 alpha and beta function as transcriptional repressors by recruitment of histone deacetylase 1 to their conserved ELM2 domain.</title>
        <authorList>
            <person name="Ding Z."/>
            <person name="Gillespie L.L."/>
            <person name="Paterno G.D."/>
        </authorList>
    </citation>
    <scope>FUNCTION</scope>
    <scope>INTERACTION WITH HDAC1</scope>
    <scope>MUTAGENESIS OF TRP-214 AND 227-PHE--LEU-228</scope>
</reference>
<reference key="10">
    <citation type="journal article" date="1998" name="Gene">
        <title>Molecular cloning of human er1 cDNA and its differential expression in breast tumours and tumour-derived cell lines.</title>
        <authorList>
            <person name="Paterno G.D."/>
            <person name="Mercer F.C."/>
            <person name="Chayter J.J."/>
            <person name="Yang X."/>
            <person name="Robb J.D."/>
            <person name="Gillespie L.L."/>
        </authorList>
    </citation>
    <scope>TISSUE SPECIFICITY</scope>
</reference>
<reference key="11">
    <citation type="journal article" date="2006" name="Cell">
        <title>Global, in vivo, and site-specific phosphorylation dynamics in signaling networks.</title>
        <authorList>
            <person name="Olsen J.V."/>
            <person name="Blagoev B."/>
            <person name="Gnad F."/>
            <person name="Macek B."/>
            <person name="Kumar C."/>
            <person name="Mortensen P."/>
            <person name="Mann M."/>
        </authorList>
    </citation>
    <scope>PHOSPHORYLATION [LARGE SCALE ANALYSIS] AT SER-488</scope>
    <scope>IDENTIFICATION BY MASS SPECTROMETRY [LARGE SCALE ANALYSIS]</scope>
    <source>
        <tissue>Cervix carcinoma</tissue>
    </source>
</reference>
<reference key="12">
    <citation type="journal article" date="2008" name="Mol. Cell">
        <title>CDYL bridges REST and histone methyltransferases for gene repression and suppression of cellular transformation.</title>
        <authorList>
            <person name="Mulligan P."/>
            <person name="Westbrook T.F."/>
            <person name="Ottinger M."/>
            <person name="Pavlova N."/>
            <person name="Chang B."/>
            <person name="Macia E."/>
            <person name="Shi Y.J."/>
            <person name="Barretina J."/>
            <person name="Liu J."/>
            <person name="Howley P.M."/>
            <person name="Elledge S.J."/>
            <person name="Shi Y."/>
        </authorList>
    </citation>
    <scope>IDENTIFICATION IN A COMPLEX WITH CDYL; MIER2; HDAC1 AND HDAC2</scope>
</reference>
<reference key="13">
    <citation type="journal article" date="2008" name="Proc. Natl. Acad. Sci. U.S.A.">
        <title>A quantitative atlas of mitotic phosphorylation.</title>
        <authorList>
            <person name="Dephoure N."/>
            <person name="Zhou C."/>
            <person name="Villen J."/>
            <person name="Beausoleil S.A."/>
            <person name="Bakalarski C.E."/>
            <person name="Elledge S.J."/>
            <person name="Gygi S.P."/>
        </authorList>
    </citation>
    <scope>PHOSPHORYLATION [LARGE SCALE ANALYSIS] AT TYR-155; SER-160; SER-166; SER-483 AND SER-488</scope>
    <scope>IDENTIFICATION BY MASS SPECTROMETRY [LARGE SCALE ANALYSIS]</scope>
    <source>
        <tissue>Cervix carcinoma</tissue>
    </source>
</reference>
<reference key="14">
    <citation type="journal article" date="2009" name="Sci. Signal.">
        <title>Quantitative phosphoproteomic analysis of T cell receptor signaling reveals system-wide modulation of protein-protein interactions.</title>
        <authorList>
            <person name="Mayya V."/>
            <person name="Lundgren D.H."/>
            <person name="Hwang S.-I."/>
            <person name="Rezaul K."/>
            <person name="Wu L."/>
            <person name="Eng J.K."/>
            <person name="Rodionov V."/>
            <person name="Han D.K."/>
        </authorList>
    </citation>
    <scope>PHOSPHORYLATION [LARGE SCALE ANALYSIS] AT SER-160 AND SER-166</scope>
    <scope>IDENTIFICATION BY MASS SPECTROMETRY [LARGE SCALE ANALYSIS]</scope>
    <source>
        <tissue>Leukemic T-cell</tissue>
    </source>
</reference>
<reference key="15">
    <citation type="journal article" date="2010" name="Sci. Signal.">
        <title>Quantitative phosphoproteomics reveals widespread full phosphorylation site occupancy during mitosis.</title>
        <authorList>
            <person name="Olsen J.V."/>
            <person name="Vermeulen M."/>
            <person name="Santamaria A."/>
            <person name="Kumar C."/>
            <person name="Miller M.L."/>
            <person name="Jensen L.J."/>
            <person name="Gnad F."/>
            <person name="Cox J."/>
            <person name="Jensen T.S."/>
            <person name="Nigg E.A."/>
            <person name="Brunak S."/>
            <person name="Mann M."/>
        </authorList>
    </citation>
    <scope>PHOSPHORYLATION [LARGE SCALE ANALYSIS] AT SER-166 AND SER-483</scope>
    <scope>IDENTIFICATION BY MASS SPECTROMETRY [LARGE SCALE ANALYSIS]</scope>
    <source>
        <tissue>Cervix carcinoma</tissue>
    </source>
</reference>
<reference key="16">
    <citation type="journal article" date="2011" name="BMC Syst. Biol.">
        <title>Initial characterization of the human central proteome.</title>
        <authorList>
            <person name="Burkard T.R."/>
            <person name="Planyavsky M."/>
            <person name="Kaupe I."/>
            <person name="Breitwieser F.P."/>
            <person name="Buerckstuemmer T."/>
            <person name="Bennett K.L."/>
            <person name="Superti-Furga G."/>
            <person name="Colinge J."/>
        </authorList>
    </citation>
    <scope>IDENTIFICATION BY MASS SPECTROMETRY [LARGE SCALE ANALYSIS]</scope>
</reference>
<reference key="17">
    <citation type="journal article" date="2011" name="Sci. Signal.">
        <title>System-wide temporal characterization of the proteome and phosphoproteome of human embryonic stem cell differentiation.</title>
        <authorList>
            <person name="Rigbolt K.T."/>
            <person name="Prokhorova T.A."/>
            <person name="Akimov V."/>
            <person name="Henningsen J."/>
            <person name="Johansen P.T."/>
            <person name="Kratchmarova I."/>
            <person name="Kassem M."/>
            <person name="Mann M."/>
            <person name="Olsen J.V."/>
            <person name="Blagoev B."/>
        </authorList>
    </citation>
    <scope>PHOSPHORYLATION [LARGE SCALE ANALYSIS] AT SER-160; SER-166; SER-483 AND SER-488</scope>
    <scope>IDENTIFICATION BY MASS SPECTROMETRY [LARGE SCALE ANALYSIS]</scope>
</reference>
<reference key="18">
    <citation type="journal article" date="2013" name="J. Proteome Res.">
        <title>Toward a comprehensive characterization of a human cancer cell phosphoproteome.</title>
        <authorList>
            <person name="Zhou H."/>
            <person name="Di Palma S."/>
            <person name="Preisinger C."/>
            <person name="Peng M."/>
            <person name="Polat A.N."/>
            <person name="Heck A.J."/>
            <person name="Mohammed S."/>
        </authorList>
    </citation>
    <scope>PHOSPHORYLATION [LARGE SCALE ANALYSIS] AT SER-141; SER-367; SER-369; SER-377; THR-448; SER-483; SER-488 AND SER-491</scope>
    <scope>IDENTIFICATION BY MASS SPECTROMETRY [LARGE SCALE ANALYSIS]</scope>
    <source>
        <tissue>Cervix carcinoma</tissue>
        <tissue>Erythroleukemia</tissue>
    </source>
</reference>
<reference key="19">
    <citation type="journal article" date="2014" name="J. Proteomics">
        <title>An enzyme assisted RP-RPLC approach for in-depth analysis of human liver phosphoproteome.</title>
        <authorList>
            <person name="Bian Y."/>
            <person name="Song C."/>
            <person name="Cheng K."/>
            <person name="Dong M."/>
            <person name="Wang F."/>
            <person name="Huang J."/>
            <person name="Sun D."/>
            <person name="Wang L."/>
            <person name="Ye M."/>
            <person name="Zou H."/>
        </authorList>
    </citation>
    <scope>PHOSPHORYLATION [LARGE SCALE ANALYSIS] AT SER-10 AND SER-377</scope>
    <scope>IDENTIFICATION BY MASS SPECTROMETRY [LARGE SCALE ANALYSIS]</scope>
    <source>
        <tissue>Liver</tissue>
    </source>
</reference>
<reference key="20">
    <citation type="journal article" date="2014" name="Nat. Struct. Mol. Biol.">
        <title>Uncovering global SUMOylation signaling networks in a site-specific manner.</title>
        <authorList>
            <person name="Hendriks I.A."/>
            <person name="D'Souza R.C."/>
            <person name="Yang B."/>
            <person name="Verlaan-de Vries M."/>
            <person name="Mann M."/>
            <person name="Vertegaal A.C."/>
        </authorList>
    </citation>
    <scope>SUMOYLATION [LARGE SCALE ANALYSIS] AT LYS-420</scope>
    <scope>IDENTIFICATION BY MASS SPECTROMETRY [LARGE SCALE ANALYSIS]</scope>
</reference>
<reference key="21">
    <citation type="journal article" date="2017" name="Nat. Struct. Mol. Biol.">
        <title>Site-specific mapping of the human SUMO proteome reveals co-modification with phosphorylation.</title>
        <authorList>
            <person name="Hendriks I.A."/>
            <person name="Lyon D."/>
            <person name="Young C."/>
            <person name="Jensen L.J."/>
            <person name="Vertegaal A.C."/>
            <person name="Nielsen M.L."/>
        </authorList>
    </citation>
    <scope>SUMOYLATION [LARGE SCALE ANALYSIS] AT LYS-239 AND LYS-420</scope>
    <scope>IDENTIFICATION BY MASS SPECTROMETRY [LARGE SCALE ANALYSIS]</scope>
</reference>
<keyword id="KW-0025">Alternative splicing</keyword>
<keyword id="KW-0963">Cytoplasm</keyword>
<keyword id="KW-1017">Isopeptide bond</keyword>
<keyword id="KW-0539">Nucleus</keyword>
<keyword id="KW-0597">Phosphoprotein</keyword>
<keyword id="KW-1267">Proteomics identification</keyword>
<keyword id="KW-1185">Reference proteome</keyword>
<keyword id="KW-0678">Repressor</keyword>
<keyword id="KW-0804">Transcription</keyword>
<keyword id="KW-0805">Transcription regulation</keyword>
<keyword id="KW-0832">Ubl conjugation</keyword>
<evidence type="ECO:0000255" key="1">
    <source>
        <dbReference type="PROSITE-ProRule" id="PRU00512"/>
    </source>
</evidence>
<evidence type="ECO:0000255" key="2">
    <source>
        <dbReference type="PROSITE-ProRule" id="PRU00624"/>
    </source>
</evidence>
<evidence type="ECO:0000256" key="3">
    <source>
        <dbReference type="SAM" id="MobiDB-lite"/>
    </source>
</evidence>
<evidence type="ECO:0000269" key="4">
    <source>
    </source>
</evidence>
<evidence type="ECO:0000269" key="5">
    <source>
    </source>
</evidence>
<evidence type="ECO:0000269" key="6">
    <source>
    </source>
</evidence>
<evidence type="ECO:0000269" key="7">
    <source>
    </source>
</evidence>
<evidence type="ECO:0000303" key="8">
    <source>
    </source>
</evidence>
<evidence type="ECO:0000303" key="9">
    <source>
    </source>
</evidence>
<evidence type="ECO:0000303" key="10">
    <source>
    </source>
</evidence>
<evidence type="ECO:0000303" key="11">
    <source>
    </source>
</evidence>
<evidence type="ECO:0000305" key="12"/>
<evidence type="ECO:0007744" key="13">
    <source>
    </source>
</evidence>
<evidence type="ECO:0007744" key="14">
    <source>
    </source>
</evidence>
<evidence type="ECO:0007744" key="15">
    <source>
    </source>
</evidence>
<evidence type="ECO:0007744" key="16">
    <source>
    </source>
</evidence>
<evidence type="ECO:0007744" key="17">
    <source>
    </source>
</evidence>
<evidence type="ECO:0007744" key="18">
    <source>
    </source>
</evidence>
<evidence type="ECO:0007744" key="19">
    <source>
    </source>
</evidence>
<evidence type="ECO:0007744" key="20">
    <source>
    </source>
</evidence>
<evidence type="ECO:0007744" key="21">
    <source>
    </source>
</evidence>
<comment type="function">
    <text evidence="5">Transcriptional repressor regulating the expression of a number of genes including SP1 target genes. Probably functions through recruitment of HDAC1 a histone deacetylase involved in chromatin silencing.</text>
</comment>
<comment type="subunit">
    <text evidence="5 6">Interacts with HDAC1. Part of a complex containing at least CDYL, MIER1, MIER2, HDAC1 and HDAC2.</text>
</comment>
<comment type="interaction">
    <interactant intactId="EBI-3504940">
        <id>Q8N108</id>
    </interactant>
    <interactant intactId="EBI-301834">
        <id>Q13547</id>
        <label>HDAC1</label>
    </interactant>
    <organismsDiffer>false</organismsDiffer>
    <experiments>12</experiments>
</comment>
<comment type="interaction">
    <interactant intactId="EBI-10264833">
        <id>Q8N108-14</id>
    </interactant>
    <interactant intactId="EBI-10264837">
        <id>Q8WVE6</id>
        <label>TMEM171</label>
    </interactant>
    <organismsDiffer>false</organismsDiffer>
    <experiments>3</experiments>
</comment>
<comment type="interaction">
    <interactant intactId="EBI-25830642">
        <id>Q8N108-16</id>
    </interactant>
    <interactant intactId="EBI-1646426">
        <id>Q15109</id>
        <label>AGER</label>
    </interactant>
    <organismsDiffer>false</organismsDiffer>
    <experiments>3</experiments>
</comment>
<comment type="interaction">
    <interactant intactId="EBI-25830642">
        <id>Q8N108-16</id>
    </interactant>
    <interactant intactId="EBI-1056902">
        <id>P15311</id>
        <label>EZR</label>
    </interactant>
    <organismsDiffer>false</organismsDiffer>
    <experiments>3</experiments>
</comment>
<comment type="interaction">
    <interactant intactId="EBI-25830642">
        <id>Q8N108-16</id>
    </interactant>
    <interactant intactId="EBI-602382">
        <id>Q16512</id>
        <label>PKN1</label>
    </interactant>
    <organismsDiffer>false</organismsDiffer>
    <experiments>3</experiments>
</comment>
<comment type="interaction">
    <interactant intactId="EBI-25830642">
        <id>Q8N108-16</id>
    </interactant>
    <interactant intactId="EBI-295301">
        <id>P24928</id>
        <label>POLR2A</label>
    </interactant>
    <organismsDiffer>false</organismsDiffer>
    <experiments>3</experiments>
</comment>
<comment type="interaction">
    <interactant intactId="EBI-25830642">
        <id>Q8N108-16</id>
    </interactant>
    <interactant intactId="EBI-372899">
        <id>Q13148</id>
        <label>TARDBP</label>
    </interactant>
    <organismsDiffer>false</organismsDiffer>
    <experiments>6</experiments>
</comment>
<comment type="interaction">
    <interactant intactId="EBI-25830642">
        <id>Q8N108-16</id>
    </interactant>
    <interactant intactId="EBI-1052596">
        <id>P31930</id>
        <label>UQCRC1</label>
    </interactant>
    <organismsDiffer>false</organismsDiffer>
    <experiments>3</experiments>
</comment>
<comment type="subcellular location">
    <molecule>Isoform 1</molecule>
    <subcellularLocation>
        <location>Nucleus</location>
    </subcellularLocation>
</comment>
<comment type="subcellular location">
    <molecule>Isoform 2</molecule>
    <subcellularLocation>
        <location>Nucleus</location>
    </subcellularLocation>
</comment>
<comment type="subcellular location">
    <molecule>Isoform 3</molecule>
    <subcellularLocation>
        <location>Nucleus</location>
    </subcellularLocation>
</comment>
<comment type="subcellular location">
    <molecule>Isoform 4</molecule>
    <subcellularLocation>
        <location>Cytoplasm</location>
    </subcellularLocation>
</comment>
<comment type="subcellular location">
    <molecule>Isoform 5</molecule>
    <subcellularLocation>
        <location>Cytoplasm</location>
    </subcellularLocation>
</comment>
<comment type="subcellular location">
    <molecule>Isoform 6</molecule>
    <subcellularLocation>
        <location>Cytoplasm</location>
    </subcellularLocation>
</comment>
<comment type="alternative products">
    <event type="alternative splicing"/>
    <isoform>
        <id>Q8N108-11</id>
        <name>1</name>
        <name>N3-beta</name>
        <sequence type="displayed"/>
    </isoform>
    <isoform>
        <id>Q8N108-12</id>
        <name>2</name>
        <name>N2-beta</name>
        <sequence type="described" ref="VSP_042450"/>
    </isoform>
    <isoform>
        <id>Q8N108-13</id>
        <name>3</name>
        <name>N1-beta</name>
        <sequence type="described" ref="VSP_042451"/>
    </isoform>
    <isoform>
        <id>Q8N108-14</id>
        <name>4</name>
        <name>N1-alpha</name>
        <sequence type="described" ref="VSP_042451 VSP_042452 VSP_042453"/>
    </isoform>
    <isoform>
        <id>Q8N108-15</id>
        <name>5</name>
        <name>N2-alpha</name>
        <sequence type="described" ref="VSP_042450 VSP_042452 VSP_042453"/>
    </isoform>
    <isoform>
        <id>Q8N108-16</id>
        <name>6</name>
        <name>N3-alpha</name>
        <sequence type="described" ref="VSP_042452 VSP_042453"/>
    </isoform>
    <isoform>
        <id>Q8N108-17</id>
        <name>7</name>
        <sequence type="described" ref="VSP_042449"/>
    </isoform>
    <isoform>
        <id>Q8N108-18</id>
        <name>8</name>
        <sequence type="described" ref="VSP_042451 VSP_043218"/>
    </isoform>
    <isoform>
        <id>Q8N108-19</id>
        <name>9</name>
        <sequence type="described" ref="VSP_044343 VSP_044344"/>
    </isoform>
    <isoform>
        <id>Q8N108-20</id>
        <name>10</name>
        <sequence type="described" ref="VSP_042451 VSP_055710 VSP_055711"/>
    </isoform>
</comment>
<comment type="tissue specificity">
    <text evidence="4 7">Ubiquitously expressed, but at very low levels. However, consistent level of expression are observed in heart, testis, thyroid, ovary and adrenal gland. Transcripts are up-regulated in breast carcinoma cell lines and tumor.</text>
</comment>
<comment type="miscellaneous">
    <molecule>Isoform 2</molecule>
    <text evidence="12">It is uncertain whether Met-1 or Met-55 is the initiator.</text>
</comment>
<comment type="miscellaneous">
    <molecule>Isoform 5</molecule>
    <text evidence="12">It is uncertain whether Met-1 or Met-55 is the initiator.</text>
</comment>
<comment type="sequence caution" evidence="12">
    <conflict type="miscellaneous discrepancy">
        <sequence resource="EMBL-CDS" id="AAH17423"/>
    </conflict>
    <text>Wrong choice of CDS. Probable cloning artifact due to reverse transcription from RNA internal poly-A tracts.</text>
</comment>
<comment type="sequence caution" evidence="12">
    <conflict type="erroneous initiation">
        <sequence resource="EMBL-CDS" id="AAM76041"/>
    </conflict>
    <text>Truncated N-terminus.</text>
</comment>
<comment type="sequence caution" evidence="12">
    <conflict type="erroneous initiation">
        <sequence resource="EMBL-CDS" id="AAM97500"/>
    </conflict>
    <text>Truncated N-terminus.</text>
</comment>
<comment type="sequence caution" evidence="12">
    <conflict type="erroneous initiation">
        <sequence resource="EMBL-CDS" id="AAM97503"/>
    </conflict>
    <text>Truncated N-terminus.</text>
</comment>
<comment type="sequence caution" evidence="12">
    <conflict type="erroneous initiation">
        <sequence resource="EMBL-CDS" id="AAM97506"/>
    </conflict>
    <text>Truncated N-terminus.</text>
</comment>
<comment type="sequence caution" evidence="12">
    <conflict type="miscellaneous discrepancy">
        <sequence resource="EMBL-CDS" id="BAC11339"/>
    </conflict>
    <text>Chimeric cDNA. C-terminal is identical to the product of the WLS gene.</text>
</comment>
<comment type="sequence caution" evidence="12">
    <conflict type="miscellaneous discrepancy">
        <sequence resource="EMBL-CDS" id="CAD89921"/>
    </conflict>
    <text>Wrong choice of CDS.</text>
</comment>
<comment type="online information" name="Atlas of Genetics and Cytogenetics in Oncology and Haematology">
    <link uri="https://atlasgeneticsoncology.org/gene/50389/MIER1"/>
</comment>
<protein>
    <recommendedName>
        <fullName>Mesoderm induction early response protein 1</fullName>
        <shortName>Early response 1</shortName>
        <shortName>Er1</shortName>
        <shortName>Mi-er1</shortName>
        <shortName>hMi-er1</shortName>
    </recommendedName>
</protein>
<name>MIER1_HUMAN</name>
<feature type="chain" id="PRO_0000197141" description="Mesoderm induction early response protein 1">
    <location>
        <begin position="1"/>
        <end position="512"/>
    </location>
</feature>
<feature type="domain" description="ELM2" evidence="1">
    <location>
        <begin position="180"/>
        <end position="278"/>
    </location>
</feature>
<feature type="domain" description="SANT" evidence="2">
    <location>
        <begin position="283"/>
        <end position="335"/>
    </location>
</feature>
<feature type="region of interest" description="Disordered" evidence="3">
    <location>
        <begin position="1"/>
        <end position="63"/>
    </location>
</feature>
<feature type="region of interest" description="Disordered" evidence="3">
    <location>
        <begin position="75"/>
        <end position="173"/>
    </location>
</feature>
<feature type="region of interest" description="Interaction with HDAC1" evidence="5">
    <location>
        <begin position="180"/>
        <end position="284"/>
    </location>
</feature>
<feature type="region of interest" description="Disordered" evidence="3">
    <location>
        <begin position="366"/>
        <end position="512"/>
    </location>
</feature>
<feature type="compositionally biased region" description="Low complexity" evidence="3">
    <location>
        <begin position="1"/>
        <end position="16"/>
    </location>
</feature>
<feature type="compositionally biased region" description="Basic and acidic residues" evidence="3">
    <location>
        <begin position="17"/>
        <end position="36"/>
    </location>
</feature>
<feature type="compositionally biased region" description="Acidic residues" evidence="3">
    <location>
        <begin position="37"/>
        <end position="46"/>
    </location>
</feature>
<feature type="compositionally biased region" description="Acidic residues" evidence="3">
    <location>
        <begin position="83"/>
        <end position="105"/>
    </location>
</feature>
<feature type="compositionally biased region" description="Polar residues" evidence="3">
    <location>
        <begin position="129"/>
        <end position="144"/>
    </location>
</feature>
<feature type="compositionally biased region" description="Acidic residues" evidence="3">
    <location>
        <begin position="160"/>
        <end position="173"/>
    </location>
</feature>
<feature type="compositionally biased region" description="Polar residues" evidence="3">
    <location>
        <begin position="396"/>
        <end position="409"/>
    </location>
</feature>
<feature type="compositionally biased region" description="Basic and acidic residues" evidence="3">
    <location>
        <begin position="414"/>
        <end position="423"/>
    </location>
</feature>
<feature type="compositionally biased region" description="Basic and acidic residues" evidence="3">
    <location>
        <begin position="462"/>
        <end position="475"/>
    </location>
</feature>
<feature type="compositionally biased region" description="Polar residues" evidence="3">
    <location>
        <begin position="482"/>
        <end position="494"/>
    </location>
</feature>
<feature type="modified residue" description="Phosphoserine" evidence="19">
    <location>
        <position position="10"/>
    </location>
</feature>
<feature type="modified residue" description="Phosphoserine" evidence="18">
    <location>
        <position position="141"/>
    </location>
</feature>
<feature type="modified residue" description="Phosphotyrosine" evidence="14">
    <location>
        <position position="155"/>
    </location>
</feature>
<feature type="modified residue" description="Phosphoserine" evidence="14 15 17">
    <location>
        <position position="160"/>
    </location>
</feature>
<feature type="modified residue" description="Phosphoserine" evidence="14 15 16 17">
    <location>
        <position position="166"/>
    </location>
</feature>
<feature type="modified residue" description="Phosphoserine" evidence="18">
    <location>
        <position position="367"/>
    </location>
</feature>
<feature type="modified residue" description="Phosphoserine" evidence="18">
    <location>
        <position position="369"/>
    </location>
</feature>
<feature type="modified residue" description="Phosphoserine" evidence="18 19">
    <location>
        <position position="377"/>
    </location>
</feature>
<feature type="modified residue" description="Phosphothreonine" evidence="18">
    <location>
        <position position="448"/>
    </location>
</feature>
<feature type="modified residue" description="Phosphoserine" evidence="14 16 17 18">
    <location>
        <position position="483"/>
    </location>
</feature>
<feature type="modified residue" description="Phosphoserine" evidence="13 14 17 18">
    <location>
        <position position="488"/>
    </location>
</feature>
<feature type="modified residue" description="Phosphoserine" evidence="18">
    <location>
        <position position="491"/>
    </location>
</feature>
<feature type="cross-link" description="Glycyl lysine isopeptide (Lys-Gly) (interchain with G-Cter in SUMO2)" evidence="21">
    <location>
        <position position="239"/>
    </location>
</feature>
<feature type="cross-link" description="Glycyl lysine isopeptide (Lys-Gly) (interchain with G-Cter in SUMO2)" evidence="20 21">
    <location>
        <position position="420"/>
    </location>
</feature>
<feature type="splice variant" id="VSP_044343" description="In isoform 9." evidence="10">
    <location>
        <begin position="1"/>
        <end position="63"/>
    </location>
</feature>
<feature type="splice variant" id="VSP_042449" description="In isoform 7." evidence="11">
    <location>
        <begin position="1"/>
        <end position="27"/>
    </location>
</feature>
<feature type="splice variant" id="VSP_042450" description="In isoform 2 and isoform 5." evidence="8 9">
    <original>MAE</original>
    <variation>MDGASSGGGGSSEGGGGSSGSGYGVVARFSQCLAEFRTWLRTNWLRFNADKTDVML</variation>
    <location>
        <begin position="1"/>
        <end position="3"/>
    </location>
</feature>
<feature type="splice variant" id="VSP_042451" description="In isoform 3, isoform 4, isoform 8 and isoform 10." evidence="8 10 11">
    <original>MAE</original>
    <variation>MFMFNWFTDCLWTLFLSNYQ</variation>
    <location>
        <begin position="1"/>
        <end position="3"/>
    </location>
</feature>
<feature type="splice variant" id="VSP_055710" description="In isoform 10." evidence="10">
    <original>EGDM</original>
    <variation>VNNM</variation>
    <location>
        <begin position="61"/>
        <end position="64"/>
    </location>
</feature>
<feature type="splice variant" id="VSP_055711" description="In isoform 10." evidence="10">
    <location>
        <begin position="65"/>
        <end position="512"/>
    </location>
</feature>
<feature type="splice variant" id="VSP_044344" description="In isoform 9." evidence="10">
    <original>EILNKEEVKVEGLHINGPTGGNKKPLHADMDTNGYETDNLTTDPKLAHMTARNENDFDEKSERPAKRRRVNSNGKESPGSSEFFQEAVSHGKFEELENTDD</original>
    <variation>ILQMLLPVHFSAISSRANAFLK</variation>
    <location>
        <begin position="412"/>
        <end position="512"/>
    </location>
</feature>
<feature type="splice variant" id="VSP_042452" description="In isoform 4, isoform 5 and isoform 6." evidence="8">
    <original>EILNKEEVKVEGLHINGPTGGN</original>
    <variation>ILQMLLPVHFSAISSRANAFLK</variation>
    <location>
        <begin position="412"/>
        <end position="433"/>
    </location>
</feature>
<feature type="splice variant" id="VSP_043218" description="In isoform 8." evidence="10">
    <original>GNKKPLHADMDTNGYETDNLTTDPKLAHMTARNENDFDEKSERPAKRRRVNSNGKESPGSSEFFQEAVSHGKFEELENTDD</original>
    <variation>ILQMLLPVHFSAISSRANAFLK</variation>
    <location>
        <begin position="432"/>
        <end position="512"/>
    </location>
</feature>
<feature type="splice variant" id="VSP_042453" description="In isoform 4, isoform 5 and isoform 6." evidence="8">
    <location>
        <begin position="434"/>
        <end position="512"/>
    </location>
</feature>
<feature type="mutagenesis site" description="Loss of transcriptional repression and HDAC1 recruitment activity." evidence="5">
    <original>W</original>
    <variation>A</variation>
    <location>
        <position position="214"/>
    </location>
</feature>
<feature type="mutagenesis site" description="Loss of transcriptional repression and HDAC1 recruitment activity." evidence="5">
    <original>FL</original>
    <variation>AA</variation>
    <location>
        <begin position="227"/>
        <end position="228"/>
    </location>
</feature>
<feature type="sequence conflict" description="In Ref. 7; BC066898." evidence="12" ref="7">
    <original>S</original>
    <variation>P</variation>
    <location>
        <position position="14"/>
    </location>
</feature>
<feature type="sequence conflict" description="In Ref. 4; CAH10526." evidence="12" ref="4">
    <original>Q</original>
    <variation>H</variation>
    <location>
        <position position="142"/>
    </location>
</feature>
<feature type="sequence conflict" description="In Ref. 3; BAC11339." evidence="12" ref="3">
    <original>F</original>
    <variation>S</variation>
    <location>
        <position position="156"/>
    </location>
</feature>
<feature type="sequence conflict" description="In Ref. 4; CAH10526." evidence="12" ref="4">
    <original>D</original>
    <variation>G</variation>
    <location>
        <position position="237"/>
    </location>
</feature>
<feature type="sequence conflict" description="In Ref. 1; AAM76041/AAM97503/AAM97506." evidence="12" ref="1">
    <original>M</original>
    <variation>L</variation>
    <location sequence="Q8N108-12">
        <position position="1"/>
    </location>
</feature>
<feature type="sequence conflict" description="In Ref. 1; AAM97500." evidence="12" ref="1">
    <original>M</original>
    <variation>L</variation>
    <location sequence="Q8N108-15">
        <position position="1"/>
    </location>
</feature>
<organism>
    <name type="scientific">Homo sapiens</name>
    <name type="common">Human</name>
    <dbReference type="NCBI Taxonomy" id="9606"/>
    <lineage>
        <taxon>Eukaryota</taxon>
        <taxon>Metazoa</taxon>
        <taxon>Chordata</taxon>
        <taxon>Craniata</taxon>
        <taxon>Vertebrata</taxon>
        <taxon>Euteleostomi</taxon>
        <taxon>Mammalia</taxon>
        <taxon>Eutheria</taxon>
        <taxon>Euarchontoglires</taxon>
        <taxon>Primates</taxon>
        <taxon>Haplorrhini</taxon>
        <taxon>Catarrhini</taxon>
        <taxon>Hominidae</taxon>
        <taxon>Homo</taxon>
    </lineage>
</organism>
<gene>
    <name type="primary">MIER1</name>
    <name type="synonym">KIAA1610</name>
</gene>
<dbReference type="EMBL" id="AF515446">
    <property type="protein sequence ID" value="AAM76040.1"/>
    <property type="molecule type" value="mRNA"/>
</dbReference>
<dbReference type="EMBL" id="AF515447">
    <property type="protein sequence ID" value="AAM76041.1"/>
    <property type="status" value="ALT_INIT"/>
    <property type="molecule type" value="mRNA"/>
</dbReference>
<dbReference type="EMBL" id="AF515448">
    <property type="protein sequence ID" value="AAM76042.2"/>
    <property type="molecule type" value="mRNA"/>
</dbReference>
<dbReference type="EMBL" id="AY124186">
    <property type="protein sequence ID" value="AAM97499.2"/>
    <property type="molecule type" value="mRNA"/>
</dbReference>
<dbReference type="EMBL" id="AY124187">
    <property type="protein sequence ID" value="AAM97500.1"/>
    <property type="status" value="ALT_INIT"/>
    <property type="molecule type" value="mRNA"/>
</dbReference>
<dbReference type="EMBL" id="AY124188">
    <property type="protein sequence ID" value="AAM97501.1"/>
    <property type="molecule type" value="mRNA"/>
</dbReference>
<dbReference type="EMBL" id="AY124189">
    <property type="protein sequence ID" value="AAM97502.2"/>
    <property type="molecule type" value="mRNA"/>
</dbReference>
<dbReference type="EMBL" id="AY124190">
    <property type="protein sequence ID" value="AAM97503.1"/>
    <property type="status" value="ALT_INIT"/>
    <property type="molecule type" value="mRNA"/>
</dbReference>
<dbReference type="EMBL" id="AY124191">
    <property type="protein sequence ID" value="AAM97504.1"/>
    <property type="molecule type" value="mRNA"/>
</dbReference>
<dbReference type="EMBL" id="AY124192">
    <property type="protein sequence ID" value="AAM97505.2"/>
    <property type="molecule type" value="mRNA"/>
</dbReference>
<dbReference type="EMBL" id="AY124193">
    <property type="protein sequence ID" value="AAM97506.1"/>
    <property type="status" value="ALT_INIT"/>
    <property type="molecule type" value="mRNA"/>
</dbReference>
<dbReference type="EMBL" id="AY124194">
    <property type="protein sequence ID" value="AAM97507.1"/>
    <property type="molecule type" value="mRNA"/>
</dbReference>
<dbReference type="EMBL" id="AK074990">
    <property type="protein sequence ID" value="BAC11339.1"/>
    <property type="status" value="ALT_SEQ"/>
    <property type="molecule type" value="mRNA"/>
</dbReference>
<dbReference type="EMBL" id="AK302061">
    <property type="protein sequence ID" value="BAG63451.1"/>
    <property type="molecule type" value="mRNA"/>
</dbReference>
<dbReference type="EMBL" id="AL831987">
    <property type="protein sequence ID" value="CAD89921.1"/>
    <property type="status" value="ALT_SEQ"/>
    <property type="molecule type" value="mRNA"/>
</dbReference>
<dbReference type="EMBL" id="CR627441">
    <property type="protein sequence ID" value="CAH10526.1"/>
    <property type="molecule type" value="mRNA"/>
</dbReference>
<dbReference type="EMBL" id="AL139216">
    <property type="status" value="NOT_ANNOTATED_CDS"/>
    <property type="molecule type" value="Genomic_DNA"/>
</dbReference>
<dbReference type="EMBL" id="AL500525">
    <property type="status" value="NOT_ANNOTATED_CDS"/>
    <property type="molecule type" value="Genomic_DNA"/>
</dbReference>
<dbReference type="EMBL" id="CH471059">
    <property type="protein sequence ID" value="EAX06505.1"/>
    <property type="molecule type" value="Genomic_DNA"/>
</dbReference>
<dbReference type="EMBL" id="CH471059">
    <property type="protein sequence ID" value="EAX06508.1"/>
    <property type="molecule type" value="Genomic_DNA"/>
</dbReference>
<dbReference type="EMBL" id="BC017423">
    <property type="protein sequence ID" value="AAH17423.1"/>
    <property type="status" value="ALT_SEQ"/>
    <property type="molecule type" value="mRNA"/>
</dbReference>
<dbReference type="EMBL" id="BC066898">
    <property type="status" value="NOT_ANNOTATED_CDS"/>
    <property type="molecule type" value="mRNA"/>
</dbReference>
<dbReference type="EMBL" id="BC108726">
    <property type="protein sequence ID" value="AAI08727.1"/>
    <property type="molecule type" value="mRNA"/>
</dbReference>
<dbReference type="EMBL" id="BC125217">
    <property type="protein sequence ID" value="AAI25218.1"/>
    <property type="molecule type" value="mRNA"/>
</dbReference>
<dbReference type="EMBL" id="BC125218">
    <property type="protein sequence ID" value="AAI25219.1"/>
    <property type="molecule type" value="mRNA"/>
</dbReference>
<dbReference type="EMBL" id="AB046830">
    <property type="protein sequence ID" value="BAB13436.1"/>
    <property type="molecule type" value="mRNA"/>
</dbReference>
<dbReference type="CCDS" id="CCDS41347.1">
    <molecule id="Q8N108-16"/>
</dbReference>
<dbReference type="CCDS" id="CCDS41348.1">
    <molecule id="Q8N108-11"/>
</dbReference>
<dbReference type="CCDS" id="CCDS53325.1">
    <molecule id="Q8N108-15"/>
</dbReference>
<dbReference type="CCDS" id="CCDS53326.1">
    <molecule id="Q8N108-12"/>
</dbReference>
<dbReference type="CCDS" id="CCDS53327.1">
    <molecule id="Q8N108-14"/>
</dbReference>
<dbReference type="CCDS" id="CCDS53328.1">
    <molecule id="Q8N108-18"/>
</dbReference>
<dbReference type="CCDS" id="CCDS53329.1">
    <molecule id="Q8N108-13"/>
</dbReference>
<dbReference type="CCDS" id="CCDS53330.1">
    <molecule id="Q8N108-19"/>
</dbReference>
<dbReference type="CCDS" id="CCDS60163.1">
    <molecule id="Q8N108-20"/>
</dbReference>
<dbReference type="RefSeq" id="NP_001071168.2">
    <molecule id="Q8N108-12"/>
    <property type="nucleotide sequence ID" value="NM_001077700.3"/>
</dbReference>
<dbReference type="RefSeq" id="NP_001071169.1">
    <molecule id="Q8N108-11"/>
    <property type="nucleotide sequence ID" value="NM_001077701.3"/>
</dbReference>
<dbReference type="RefSeq" id="NP_001071170.2">
    <molecule id="Q8N108-14"/>
    <property type="nucleotide sequence ID" value="NM_001077702.3"/>
</dbReference>
<dbReference type="RefSeq" id="NP_001071171.2">
    <molecule id="Q8N108-15"/>
    <property type="nucleotide sequence ID" value="NM_001077703.3"/>
</dbReference>
<dbReference type="RefSeq" id="NP_001071172.1">
    <molecule id="Q8N108-16"/>
    <property type="nucleotide sequence ID" value="NM_001077704.3"/>
</dbReference>
<dbReference type="RefSeq" id="NP_001139582.1">
    <molecule id="Q8N108-13"/>
    <property type="nucleotide sequence ID" value="NM_001146110.2"/>
</dbReference>
<dbReference type="RefSeq" id="NP_001139583.1">
    <molecule id="Q8N108-18"/>
    <property type="nucleotide sequence ID" value="NM_001146111.2"/>
</dbReference>
<dbReference type="RefSeq" id="NP_001139584.1">
    <molecule id="Q8N108-17"/>
    <property type="nucleotide sequence ID" value="NM_001146112.2"/>
</dbReference>
<dbReference type="RefSeq" id="NP_001139585.1">
    <molecule id="Q8N108-19"/>
    <property type="nucleotide sequence ID" value="NM_001146113.2"/>
</dbReference>
<dbReference type="RefSeq" id="NP_001265144.1">
    <molecule id="Q8N108-20"/>
    <property type="nucleotide sequence ID" value="NM_001278215.2"/>
</dbReference>
<dbReference type="RefSeq" id="NP_065999.2">
    <molecule id="Q8N108-13"/>
    <property type="nucleotide sequence ID" value="NM_020948.4"/>
</dbReference>
<dbReference type="RefSeq" id="XP_005271133.1">
    <property type="nucleotide sequence ID" value="XM_005271076.3"/>
</dbReference>
<dbReference type="RefSeq" id="XP_016857413.1">
    <molecule id="Q8N108-13"/>
    <property type="nucleotide sequence ID" value="XM_017001924.2"/>
</dbReference>
<dbReference type="RefSeq" id="XP_016857414.1">
    <property type="nucleotide sequence ID" value="XM_017001925.1"/>
</dbReference>
<dbReference type="RefSeq" id="XP_016857415.1">
    <property type="nucleotide sequence ID" value="XM_017001926.1"/>
</dbReference>
<dbReference type="RefSeq" id="XP_016857416.1">
    <property type="nucleotide sequence ID" value="XM_017001927.1"/>
</dbReference>
<dbReference type="RefSeq" id="XP_016857417.1">
    <property type="nucleotide sequence ID" value="XM_017001928.1"/>
</dbReference>
<dbReference type="RefSeq" id="XP_016857420.1">
    <molecule id="Q8N108-17"/>
    <property type="nucleotide sequence ID" value="XM_017001931.2"/>
</dbReference>
<dbReference type="RefSeq" id="XP_047282216.1">
    <molecule id="Q8N108-13"/>
    <property type="nucleotide sequence ID" value="XM_047426260.1"/>
</dbReference>
<dbReference type="RefSeq" id="XP_047282219.1">
    <molecule id="Q8N108-13"/>
    <property type="nucleotide sequence ID" value="XM_047426263.1"/>
</dbReference>
<dbReference type="RefSeq" id="XP_054193887.1">
    <molecule id="Q8N108-13"/>
    <property type="nucleotide sequence ID" value="XM_054337912.1"/>
</dbReference>
<dbReference type="RefSeq" id="XP_054193888.1">
    <molecule id="Q8N108-13"/>
    <property type="nucleotide sequence ID" value="XM_054337913.1"/>
</dbReference>
<dbReference type="RefSeq" id="XP_054193892.1">
    <molecule id="Q8N108-17"/>
    <property type="nucleotide sequence ID" value="XM_054337917.1"/>
</dbReference>
<dbReference type="BioGRID" id="121732">
    <property type="interactions" value="92"/>
</dbReference>
<dbReference type="ComplexPortal" id="CPX-2184">
    <property type="entry name" value="MIER1 histone deacetylase complex, HDAC1 variant"/>
</dbReference>
<dbReference type="ComplexPortal" id="CPX-9162">
    <property type="entry name" value="MIER1 histone deacetylase complex, HDAC2 variant"/>
</dbReference>
<dbReference type="CORUM" id="Q8N108"/>
<dbReference type="FunCoup" id="Q8N108">
    <property type="interactions" value="2491"/>
</dbReference>
<dbReference type="IntAct" id="Q8N108">
    <property type="interactions" value="50"/>
</dbReference>
<dbReference type="MINT" id="Q8N108"/>
<dbReference type="STRING" id="9606.ENSP00000383820"/>
<dbReference type="GlyGen" id="Q8N108">
    <property type="glycosylation" value="1 site"/>
</dbReference>
<dbReference type="iPTMnet" id="Q8N108"/>
<dbReference type="PhosphoSitePlus" id="Q8N108"/>
<dbReference type="BioMuta" id="MIER1"/>
<dbReference type="DMDM" id="380865399"/>
<dbReference type="jPOST" id="Q8N108"/>
<dbReference type="MassIVE" id="Q8N108"/>
<dbReference type="PaxDb" id="9606-ENSP00000383820"/>
<dbReference type="PeptideAtlas" id="Q8N108"/>
<dbReference type="ProteomicsDB" id="58657"/>
<dbReference type="ProteomicsDB" id="64844"/>
<dbReference type="ProteomicsDB" id="71504">
    <molecule id="Q8N108-11"/>
</dbReference>
<dbReference type="ProteomicsDB" id="71505">
    <molecule id="Q8N108-12"/>
</dbReference>
<dbReference type="ProteomicsDB" id="71506">
    <molecule id="Q8N108-13"/>
</dbReference>
<dbReference type="ProteomicsDB" id="71507">
    <molecule id="Q8N108-14"/>
</dbReference>
<dbReference type="ProteomicsDB" id="71508">
    <molecule id="Q8N108-15"/>
</dbReference>
<dbReference type="ProteomicsDB" id="71509">
    <molecule id="Q8N108-16"/>
</dbReference>
<dbReference type="ProteomicsDB" id="71510">
    <molecule id="Q8N108-17"/>
</dbReference>
<dbReference type="ProteomicsDB" id="71511">
    <molecule id="Q8N108-18"/>
</dbReference>
<dbReference type="Antibodypedia" id="9204">
    <property type="antibodies" value="110 antibodies from 21 providers"/>
</dbReference>
<dbReference type="DNASU" id="57708"/>
<dbReference type="Ensembl" id="ENST00000355356.3">
    <molecule id="Q8N108-11"/>
    <property type="protein sequence ID" value="ENSP00000347514.3"/>
    <property type="gene ID" value="ENSG00000198160.15"/>
</dbReference>
<dbReference type="Ensembl" id="ENST00000355977.10">
    <molecule id="Q8N108-19"/>
    <property type="protein sequence ID" value="ENSP00000348253.6"/>
    <property type="gene ID" value="ENSG00000198160.15"/>
</dbReference>
<dbReference type="Ensembl" id="ENST00000357692.6">
    <molecule id="Q8N108-13"/>
    <property type="protein sequence ID" value="ENSP00000350321.2"/>
    <property type="gene ID" value="ENSG00000198160.15"/>
</dbReference>
<dbReference type="Ensembl" id="ENST00000371012.6">
    <molecule id="Q8N108-20"/>
    <property type="protein sequence ID" value="ENSP00000360051.2"/>
    <property type="gene ID" value="ENSG00000198160.15"/>
</dbReference>
<dbReference type="Ensembl" id="ENST00000371014.5">
    <molecule id="Q8N108-15"/>
    <property type="protein sequence ID" value="ENSP00000360053.1"/>
    <property type="gene ID" value="ENSG00000198160.15"/>
</dbReference>
<dbReference type="Ensembl" id="ENST00000371016.5">
    <molecule id="Q8N108-14"/>
    <property type="protein sequence ID" value="ENSP00000360055.1"/>
    <property type="gene ID" value="ENSG00000198160.15"/>
</dbReference>
<dbReference type="Ensembl" id="ENST00000371018.7">
    <molecule id="Q8N108-18"/>
    <property type="protein sequence ID" value="ENSP00000360057.3"/>
    <property type="gene ID" value="ENSG00000198160.15"/>
</dbReference>
<dbReference type="Ensembl" id="ENST00000401041.6">
    <molecule id="Q8N108-12"/>
    <property type="protein sequence ID" value="ENSP00000383820.1"/>
    <property type="gene ID" value="ENSG00000198160.15"/>
</dbReference>
<dbReference type="Ensembl" id="ENST00000401042.7">
    <molecule id="Q8N108-16"/>
    <property type="protein sequence ID" value="ENSP00000383821.3"/>
    <property type="gene ID" value="ENSG00000198160.15"/>
</dbReference>
<dbReference type="GeneID" id="57708"/>
<dbReference type="KEGG" id="hsa:57708"/>
<dbReference type="MANE-Select" id="ENST00000401041.6">
    <molecule id="Q8N108-12"/>
    <property type="protein sequence ID" value="ENSP00000383820.1"/>
    <property type="RefSeq nucleotide sequence ID" value="NM_001077700.3"/>
    <property type="RefSeq protein sequence ID" value="NP_001071168.2"/>
</dbReference>
<dbReference type="UCSC" id="uc001dda.6">
    <molecule id="Q8N108-11"/>
    <property type="organism name" value="human"/>
</dbReference>
<dbReference type="AGR" id="HGNC:29657"/>
<dbReference type="CTD" id="57708"/>
<dbReference type="DisGeNET" id="57708"/>
<dbReference type="GeneCards" id="MIER1"/>
<dbReference type="HGNC" id="HGNC:29657">
    <property type="gene designation" value="MIER1"/>
</dbReference>
<dbReference type="HPA" id="ENSG00000198160">
    <property type="expression patterns" value="Tissue enhanced (bone)"/>
</dbReference>
<dbReference type="neXtProt" id="NX_Q8N108"/>
<dbReference type="OpenTargets" id="ENSG00000198160"/>
<dbReference type="PharmGKB" id="PA142671456"/>
<dbReference type="VEuPathDB" id="HostDB:ENSG00000198160"/>
<dbReference type="eggNOG" id="KOG4329">
    <property type="taxonomic scope" value="Eukaryota"/>
</dbReference>
<dbReference type="GeneTree" id="ENSGT01030000234573"/>
<dbReference type="HOGENOM" id="CLU_195428_0_0_1"/>
<dbReference type="InParanoid" id="Q8N108"/>
<dbReference type="OMA" id="DCELFER"/>
<dbReference type="OrthoDB" id="5916873at2759"/>
<dbReference type="PAN-GO" id="Q8N108">
    <property type="GO annotations" value="5 GO annotations based on evolutionary models"/>
</dbReference>
<dbReference type="TreeFam" id="TF106453"/>
<dbReference type="PathwayCommons" id="Q8N108"/>
<dbReference type="SignaLink" id="Q8N108"/>
<dbReference type="BioGRID-ORCS" id="57708">
    <property type="hits" value="13 hits in 1163 CRISPR screens"/>
</dbReference>
<dbReference type="ChiTaRS" id="MIER1">
    <property type="organism name" value="human"/>
</dbReference>
<dbReference type="GeneWiki" id="MIER1"/>
<dbReference type="GenomeRNAi" id="57708"/>
<dbReference type="Pharos" id="Q8N108">
    <property type="development level" value="Tbio"/>
</dbReference>
<dbReference type="PRO" id="PR:Q8N108"/>
<dbReference type="Proteomes" id="UP000005640">
    <property type="component" value="Chromosome 1"/>
</dbReference>
<dbReference type="RNAct" id="Q8N108">
    <property type="molecule type" value="protein"/>
</dbReference>
<dbReference type="Bgee" id="ENSG00000198160">
    <property type="expression patterns" value="Expressed in calcaneal tendon and 194 other cell types or tissues"/>
</dbReference>
<dbReference type="GO" id="GO:0005737">
    <property type="term" value="C:cytoplasm"/>
    <property type="evidence" value="ECO:0007669"/>
    <property type="project" value="UniProtKB-SubCell"/>
</dbReference>
<dbReference type="GO" id="GO:0005654">
    <property type="term" value="C:nucleoplasm"/>
    <property type="evidence" value="ECO:0000314"/>
    <property type="project" value="HPA"/>
</dbReference>
<dbReference type="GO" id="GO:0005634">
    <property type="term" value="C:nucleus"/>
    <property type="evidence" value="ECO:0000314"/>
    <property type="project" value="UniProtKB"/>
</dbReference>
<dbReference type="GO" id="GO:0032991">
    <property type="term" value="C:protein-containing complex"/>
    <property type="evidence" value="ECO:0000314"/>
    <property type="project" value="UniProtKB"/>
</dbReference>
<dbReference type="GO" id="GO:0017053">
    <property type="term" value="C:transcription repressor complex"/>
    <property type="evidence" value="ECO:0000314"/>
    <property type="project" value="UniProtKB"/>
</dbReference>
<dbReference type="GO" id="GO:0042826">
    <property type="term" value="F:histone deacetylase binding"/>
    <property type="evidence" value="ECO:0000353"/>
    <property type="project" value="UniProtKB"/>
</dbReference>
<dbReference type="GO" id="GO:0003714">
    <property type="term" value="F:transcription corepressor activity"/>
    <property type="evidence" value="ECO:0000318"/>
    <property type="project" value="GO_Central"/>
</dbReference>
<dbReference type="GO" id="GO:0006338">
    <property type="term" value="P:chromatin remodeling"/>
    <property type="evidence" value="ECO:0000314"/>
    <property type="project" value="UniProtKB"/>
</dbReference>
<dbReference type="GO" id="GO:0000122">
    <property type="term" value="P:negative regulation of transcription by RNA polymerase II"/>
    <property type="evidence" value="ECO:0000318"/>
    <property type="project" value="GO_Central"/>
</dbReference>
<dbReference type="GO" id="GO:0043123">
    <property type="term" value="P:positive regulation of canonical NF-kappaB signal transduction"/>
    <property type="evidence" value="ECO:0007001"/>
    <property type="project" value="UniProtKB"/>
</dbReference>
<dbReference type="GO" id="GO:0006355">
    <property type="term" value="P:regulation of DNA-templated transcription"/>
    <property type="evidence" value="ECO:0000314"/>
    <property type="project" value="UniProtKB"/>
</dbReference>
<dbReference type="CDD" id="cd11661">
    <property type="entry name" value="SANT_MTA3_like"/>
    <property type="match status" value="1"/>
</dbReference>
<dbReference type="FunFam" id="1.10.10.60:FF:000025">
    <property type="entry name" value="Mesoderm induction early response 1, transcriptional regulator"/>
    <property type="match status" value="1"/>
</dbReference>
<dbReference type="FunFam" id="4.10.1240.50:FF:000005">
    <property type="entry name" value="Mesoderm induction early response protein 3"/>
    <property type="match status" value="1"/>
</dbReference>
<dbReference type="Gene3D" id="1.10.10.60">
    <property type="entry name" value="Homeodomain-like"/>
    <property type="match status" value="1"/>
</dbReference>
<dbReference type="InterPro" id="IPR000949">
    <property type="entry name" value="ELM2_dom"/>
</dbReference>
<dbReference type="InterPro" id="IPR009057">
    <property type="entry name" value="Homeodomain-like_sf"/>
</dbReference>
<dbReference type="InterPro" id="IPR040138">
    <property type="entry name" value="MIER/MTA"/>
</dbReference>
<dbReference type="InterPro" id="IPR045787">
    <property type="entry name" value="MIER1/3_C"/>
</dbReference>
<dbReference type="InterPro" id="IPR001005">
    <property type="entry name" value="SANT/Myb"/>
</dbReference>
<dbReference type="InterPro" id="IPR017884">
    <property type="entry name" value="SANT_dom"/>
</dbReference>
<dbReference type="PANTHER" id="PTHR10865:SF24">
    <property type="entry name" value="MESODERM INDUCTION EARLY RESPONSE PROTEIN 1"/>
    <property type="match status" value="1"/>
</dbReference>
<dbReference type="PANTHER" id="PTHR10865">
    <property type="entry name" value="METASTASIS-ASSOCIATED PROTEIN AND MESODERM INDUCTION EARLY RESPONSE PROTEIN"/>
    <property type="match status" value="1"/>
</dbReference>
<dbReference type="Pfam" id="PF01448">
    <property type="entry name" value="ELM2"/>
    <property type="match status" value="1"/>
</dbReference>
<dbReference type="Pfam" id="PF19426">
    <property type="entry name" value="MIER1_3_C"/>
    <property type="match status" value="1"/>
</dbReference>
<dbReference type="Pfam" id="PF00249">
    <property type="entry name" value="Myb_DNA-binding"/>
    <property type="match status" value="1"/>
</dbReference>
<dbReference type="SMART" id="SM01189">
    <property type="entry name" value="ELM2"/>
    <property type="match status" value="1"/>
</dbReference>
<dbReference type="SMART" id="SM00717">
    <property type="entry name" value="SANT"/>
    <property type="match status" value="1"/>
</dbReference>
<dbReference type="SUPFAM" id="SSF46689">
    <property type="entry name" value="Homeodomain-like"/>
    <property type="match status" value="1"/>
</dbReference>
<dbReference type="PROSITE" id="PS51156">
    <property type="entry name" value="ELM2"/>
    <property type="match status" value="1"/>
</dbReference>
<dbReference type="PROSITE" id="PS51293">
    <property type="entry name" value="SANT"/>
    <property type="match status" value="1"/>
</dbReference>
<accession>Q8N108</accession>
<accession>C9JFD4</accession>
<accession>Q08AE0</accession>
<accession>Q32NC4</accession>
<accession>Q5T104</accession>
<accession>Q5TAD1</accession>
<accession>Q5TAD2</accession>
<accession>Q5TAD4</accession>
<accession>Q5TAD5</accession>
<accession>Q6AHY8</accession>
<accession>Q86TB4</accession>
<accession>Q8N156</accession>
<accession>Q8N161</accession>
<accession>Q8NC37</accession>
<accession>Q8NES4</accession>
<accession>Q8NES5</accession>
<accession>Q8NES6</accession>
<accession>Q8WWG2</accession>
<accession>Q9HCG2</accession>
<sequence length="512" mass="57983">MAEPSVESSSPGGSATSDDHEFDPSADMLVHDFDDERTLEEEEMMEGETNFSSEIEDLAREGDMPIHELLSLYGYGSTVRLPEEDEEEEEEEEEGEDDEDADNDDNSGCSGENKEENIKDSSGQEDETQSSNDDPSQSVASQDAQEIIRPRRCKYFDTNSEVEEESEEDEDYIPSEDWKKEIMVGSMFQAEIPVGICRYKENEKVYENDDQLLWDPEYLPEDKVIIFLKDASRRTGDEKGVEAIPEGSHIKDNEQALYELVKCNFDTEEALRRLRFNVKAAREELSVWTEEECRNFEQGLKAYGKDFHLIQANKVRTRSVGECVAFYYMWKKSERYDFFAQQTRFGKKKYNLHPGVTDYMDRLLDESESAASSRAPSPPPTASNSSNSQSEKEDGTVSTANQNGVSSNGPGEILNKEEVKVEGLHINGPTGGNKKPLHADMDTNGYETDNLTTDPKLAHMTARNENDFDEKSERPAKRRRVNSNGKESPGSSEFFQEAVSHGKFEELENTDD</sequence>
<proteinExistence type="evidence at protein level"/>